<keyword id="KW-0325">Glycoprotein</keyword>
<keyword id="KW-1185">Reference proteome</keyword>
<keyword id="KW-0677">Repeat</keyword>
<keyword id="KW-0732">Signal</keyword>
<dbReference type="EMBL" id="AC012396">
    <property type="protein sequence ID" value="AAG30966.1"/>
    <property type="molecule type" value="Genomic_DNA"/>
</dbReference>
<dbReference type="EMBL" id="AC079676">
    <property type="protein sequence ID" value="AAG51809.1"/>
    <property type="molecule type" value="Genomic_DNA"/>
</dbReference>
<dbReference type="EMBL" id="CP002684">
    <property type="status" value="NOT_ANNOTATED_CDS"/>
    <property type="molecule type" value="Genomic_DNA"/>
</dbReference>
<dbReference type="PIR" id="E96762">
    <property type="entry name" value="E96762"/>
</dbReference>
<dbReference type="SMR" id="Q9C6B6"/>
<dbReference type="FunCoup" id="Q9C6B6">
    <property type="interactions" value="1861"/>
</dbReference>
<dbReference type="STRING" id="3702.Q9C6B6"/>
<dbReference type="TCDB" id="3.A.16.1.5">
    <property type="family name" value="the endoplasmic reticular retrotranslocon (er-rt) family"/>
</dbReference>
<dbReference type="GlyCosmos" id="Q9C6B6">
    <property type="glycosylation" value="3 sites, No reported glycans"/>
</dbReference>
<dbReference type="GlyGen" id="Q9C6B6">
    <property type="glycosylation" value="3 sites"/>
</dbReference>
<dbReference type="PaxDb" id="3702-AT1G73570.1"/>
<dbReference type="Araport" id="AT1G73570"/>
<dbReference type="TAIR" id="AT1G73570"/>
<dbReference type="eggNOG" id="KOG1550">
    <property type="taxonomic scope" value="Eukaryota"/>
</dbReference>
<dbReference type="HOGENOM" id="CLU_007931_4_0_1"/>
<dbReference type="InParanoid" id="Q9C6B6"/>
<dbReference type="PhylomeDB" id="Q9C6B6"/>
<dbReference type="PRO" id="PR:Q9C6B6"/>
<dbReference type="Proteomes" id="UP000006548">
    <property type="component" value="Chromosome 1"/>
</dbReference>
<dbReference type="ExpressionAtlas" id="Q9C6B6">
    <property type="expression patterns" value="baseline and differential"/>
</dbReference>
<dbReference type="GO" id="GO:0036503">
    <property type="term" value="P:ERAD pathway"/>
    <property type="evidence" value="ECO:0007669"/>
    <property type="project" value="InterPro"/>
</dbReference>
<dbReference type="Gene3D" id="1.25.40.10">
    <property type="entry name" value="Tetratricopeptide repeat domain"/>
    <property type="match status" value="4"/>
</dbReference>
<dbReference type="InterPro" id="IPR044623">
    <property type="entry name" value="HRD3"/>
</dbReference>
<dbReference type="InterPro" id="IPR006597">
    <property type="entry name" value="Sel1-like"/>
</dbReference>
<dbReference type="InterPro" id="IPR011990">
    <property type="entry name" value="TPR-like_helical_dom_sf"/>
</dbReference>
<dbReference type="PANTHER" id="PTHR45084">
    <property type="entry name" value="ERAD-ASSOCIATED E3 UBIQUITIN-PROTEIN LIGASE COMPONENT HRD3A-RELATED"/>
    <property type="match status" value="1"/>
</dbReference>
<dbReference type="PANTHER" id="PTHR45084:SF1">
    <property type="entry name" value="ERAD-ASSOCIATED E3 UBIQUITIN-PROTEIN LIGASE COMPONENT HRD3A-RELATED"/>
    <property type="match status" value="1"/>
</dbReference>
<dbReference type="Pfam" id="PF08238">
    <property type="entry name" value="Sel1"/>
    <property type="match status" value="7"/>
</dbReference>
<dbReference type="SMART" id="SM00671">
    <property type="entry name" value="SEL1"/>
    <property type="match status" value="7"/>
</dbReference>
<dbReference type="SUPFAM" id="SSF81901">
    <property type="entry name" value="HCP-like"/>
    <property type="match status" value="3"/>
</dbReference>
<name>HRD3B_ARATH</name>
<protein>
    <recommendedName>
        <fullName evidence="5">ERAD-associated E3 ubiquitin-protein ligase component HRD3B</fullName>
    </recommendedName>
    <alternativeName>
        <fullName evidence="5">AtSel1B</fullName>
    </alternativeName>
</protein>
<comment type="function">
    <text evidence="1">May be involved in the endoplasmic reticulum (ER) quality control system called ER-associated degradation (ERAD).</text>
</comment>
<comment type="similarity">
    <text evidence="5">Belongs to the sel-1 family.</text>
</comment>
<feature type="signal peptide" evidence="2">
    <location>
        <begin position="1"/>
        <end position="25"/>
    </location>
</feature>
<feature type="chain" id="PRO_0000431274" description="ERAD-associated E3 ubiquitin-protein ligase component HRD3B" evidence="2">
    <location>
        <begin position="26"/>
        <end position="604"/>
    </location>
</feature>
<feature type="repeat" description="Sel1-like 1" evidence="2">
    <location>
        <begin position="125"/>
        <end position="160"/>
    </location>
</feature>
<feature type="repeat" description="Sel1-like 2" evidence="2">
    <location>
        <begin position="244"/>
        <end position="274"/>
    </location>
</feature>
<feature type="repeat" description="Sel1-like 3" evidence="2">
    <location>
        <begin position="279"/>
        <end position="307"/>
    </location>
</feature>
<feature type="repeat" description="Sel1-like 4" evidence="2">
    <location>
        <begin position="311"/>
        <end position="344"/>
    </location>
</feature>
<feature type="repeat" description="Sel1-like 5" evidence="2">
    <location>
        <begin position="346"/>
        <end position="380"/>
    </location>
</feature>
<feature type="repeat" description="Sel1-like 6" evidence="2">
    <location>
        <begin position="464"/>
        <end position="492"/>
    </location>
</feature>
<feature type="repeat" description="Sel1-like 7" evidence="2">
    <location>
        <begin position="498"/>
        <end position="528"/>
    </location>
</feature>
<feature type="region of interest" description="Disordered" evidence="4">
    <location>
        <begin position="48"/>
        <end position="69"/>
    </location>
</feature>
<feature type="glycosylation site" description="N-linked (GlcNAc...) asparagine" evidence="3">
    <location>
        <position position="78"/>
    </location>
</feature>
<feature type="glycosylation site" description="N-linked (GlcNAc...) asparagine" evidence="3">
    <location>
        <position position="105"/>
    </location>
</feature>
<feature type="glycosylation site" description="N-linked (GlcNAc...) asparagine" evidence="3">
    <location>
        <position position="293"/>
    </location>
</feature>
<gene>
    <name evidence="5" type="primary">HRD3B</name>
    <name evidence="6" type="ordered locus">At1g73570</name>
    <name evidence="8" type="ORF">F6D5.4</name>
    <name evidence="7" type="ORF">T9L24.27</name>
</gene>
<evidence type="ECO:0000250" key="1">
    <source>
        <dbReference type="UniProtKB" id="Q9LM25"/>
    </source>
</evidence>
<evidence type="ECO:0000255" key="2"/>
<evidence type="ECO:0000255" key="3">
    <source>
        <dbReference type="PROSITE-ProRule" id="PRU00498"/>
    </source>
</evidence>
<evidence type="ECO:0000256" key="4">
    <source>
        <dbReference type="SAM" id="MobiDB-lite"/>
    </source>
</evidence>
<evidence type="ECO:0000305" key="5"/>
<evidence type="ECO:0000312" key="6">
    <source>
        <dbReference type="Araport" id="AT1G73570"/>
    </source>
</evidence>
<evidence type="ECO:0000312" key="7">
    <source>
        <dbReference type="EMBL" id="AAG30966.1"/>
    </source>
</evidence>
<evidence type="ECO:0000312" key="8">
    <source>
        <dbReference type="EMBL" id="AAG51809.1"/>
    </source>
</evidence>
<reference key="1">
    <citation type="journal article" date="2000" name="Nature">
        <title>Sequence and analysis of chromosome 1 of the plant Arabidopsis thaliana.</title>
        <authorList>
            <person name="Theologis A."/>
            <person name="Ecker J.R."/>
            <person name="Palm C.J."/>
            <person name="Federspiel N.A."/>
            <person name="Kaul S."/>
            <person name="White O."/>
            <person name="Alonso J."/>
            <person name="Altafi H."/>
            <person name="Araujo R."/>
            <person name="Bowman C.L."/>
            <person name="Brooks S.Y."/>
            <person name="Buehler E."/>
            <person name="Chan A."/>
            <person name="Chao Q."/>
            <person name="Chen H."/>
            <person name="Cheuk R.F."/>
            <person name="Chin C.W."/>
            <person name="Chung M.K."/>
            <person name="Conn L."/>
            <person name="Conway A.B."/>
            <person name="Conway A.R."/>
            <person name="Creasy T.H."/>
            <person name="Dewar K."/>
            <person name="Dunn P."/>
            <person name="Etgu P."/>
            <person name="Feldblyum T.V."/>
            <person name="Feng J.-D."/>
            <person name="Fong B."/>
            <person name="Fujii C.Y."/>
            <person name="Gill J.E."/>
            <person name="Goldsmith A.D."/>
            <person name="Haas B."/>
            <person name="Hansen N.F."/>
            <person name="Hughes B."/>
            <person name="Huizar L."/>
            <person name="Hunter J.L."/>
            <person name="Jenkins J."/>
            <person name="Johnson-Hopson C."/>
            <person name="Khan S."/>
            <person name="Khaykin E."/>
            <person name="Kim C.J."/>
            <person name="Koo H.L."/>
            <person name="Kremenetskaia I."/>
            <person name="Kurtz D.B."/>
            <person name="Kwan A."/>
            <person name="Lam B."/>
            <person name="Langin-Hooper S."/>
            <person name="Lee A."/>
            <person name="Lee J.M."/>
            <person name="Lenz C.A."/>
            <person name="Li J.H."/>
            <person name="Li Y.-P."/>
            <person name="Lin X."/>
            <person name="Liu S.X."/>
            <person name="Liu Z.A."/>
            <person name="Luros J.S."/>
            <person name="Maiti R."/>
            <person name="Marziali A."/>
            <person name="Militscher J."/>
            <person name="Miranda M."/>
            <person name="Nguyen M."/>
            <person name="Nierman W.C."/>
            <person name="Osborne B.I."/>
            <person name="Pai G."/>
            <person name="Peterson J."/>
            <person name="Pham P.K."/>
            <person name="Rizzo M."/>
            <person name="Rooney T."/>
            <person name="Rowley D."/>
            <person name="Sakano H."/>
            <person name="Salzberg S.L."/>
            <person name="Schwartz J.R."/>
            <person name="Shinn P."/>
            <person name="Southwick A.M."/>
            <person name="Sun H."/>
            <person name="Tallon L.J."/>
            <person name="Tambunga G."/>
            <person name="Toriumi M.J."/>
            <person name="Town C.D."/>
            <person name="Utterback T."/>
            <person name="Van Aken S."/>
            <person name="Vaysberg M."/>
            <person name="Vysotskaia V.S."/>
            <person name="Walker M."/>
            <person name="Wu D."/>
            <person name="Yu G."/>
            <person name="Fraser C.M."/>
            <person name="Venter J.C."/>
            <person name="Davis R.W."/>
        </authorList>
    </citation>
    <scope>NUCLEOTIDE SEQUENCE [LARGE SCALE GENOMIC DNA]</scope>
    <source>
        <strain>cv. Columbia</strain>
    </source>
</reference>
<reference key="2">
    <citation type="journal article" date="2017" name="Plant J.">
        <title>Araport11: a complete reannotation of the Arabidopsis thaliana reference genome.</title>
        <authorList>
            <person name="Cheng C.Y."/>
            <person name="Krishnakumar V."/>
            <person name="Chan A.P."/>
            <person name="Thibaud-Nissen F."/>
            <person name="Schobel S."/>
            <person name="Town C.D."/>
        </authorList>
    </citation>
    <scope>GENOME REANNOTATION</scope>
    <source>
        <strain>cv. Columbia</strain>
    </source>
</reference>
<sequence length="604" mass="67761">MRVSGQSIIAISLFTLSLYIHRVQARPFVLVLSNEDLNGGFNDNGAYESSDFDEFGESEPKSEEELDPGSWRRIFETNESTVHASASPQYYSGLHKILSAASEGNTTLMEEAVSEIDSSASSGDPHAQSVMGFVYGIGMMRETSRSKSILHHHFAAAGGNMQSKMALAFRYLRQNMYDKAVELYAELAETAVNSFLISKDSPMAEPVRIHIGTEENKDALRKSRGEEDEDFQILEYQAEKGNSVAMHKIGLFYYFGLRGLRRDHAKALYWFSKAEFNGLGYLYVKGYGVDKRNYTKAREYFEMAANNEDPSGHYNLGVLYLKGTGVKKDVRHATKYFFVAANAGQPKAFYQLAKMFHTGVGLTKNLEMATTFYKLVAERGPWSSLSRWALEAYLKGDVGKAFILYSRMSELGYEVAQSNAAWIVDKYGERSMCMGVYGFCTDKERHDRAHSLWWRASEQGNEHAALLIGDAYYYGRGTERDFVRAAEAYMYAKSQSNAQAMFNLGYMHEHGEGLPFDLHLAKRYYDQALQSDTAAKLPVTLALASVWVRRNYADTALVQVLNSLPEVHQKVVEWVENGMLEEVVLDPVGANVAQPLAAPVAFPQ</sequence>
<proteinExistence type="inferred from homology"/>
<organism>
    <name type="scientific">Arabidopsis thaliana</name>
    <name type="common">Mouse-ear cress</name>
    <dbReference type="NCBI Taxonomy" id="3702"/>
    <lineage>
        <taxon>Eukaryota</taxon>
        <taxon>Viridiplantae</taxon>
        <taxon>Streptophyta</taxon>
        <taxon>Embryophyta</taxon>
        <taxon>Tracheophyta</taxon>
        <taxon>Spermatophyta</taxon>
        <taxon>Magnoliopsida</taxon>
        <taxon>eudicotyledons</taxon>
        <taxon>Gunneridae</taxon>
        <taxon>Pentapetalae</taxon>
        <taxon>rosids</taxon>
        <taxon>malvids</taxon>
        <taxon>Brassicales</taxon>
        <taxon>Brassicaceae</taxon>
        <taxon>Camelineae</taxon>
        <taxon>Arabidopsis</taxon>
    </lineage>
</organism>
<accession>Q9C6B6</accession>
<accession>Q9FX49</accession>